<gene>
    <name evidence="1" type="primary">rsmH</name>
    <name type="synonym">mraW</name>
    <name type="ordered locus">SeAg_B0137</name>
</gene>
<comment type="function">
    <text evidence="1">Specifically methylates the N4 position of cytidine in position 1402 (C1402) of 16S rRNA.</text>
</comment>
<comment type="catalytic activity">
    <reaction evidence="1">
        <text>cytidine(1402) in 16S rRNA + S-adenosyl-L-methionine = N(4)-methylcytidine(1402) in 16S rRNA + S-adenosyl-L-homocysteine + H(+)</text>
        <dbReference type="Rhea" id="RHEA:42928"/>
        <dbReference type="Rhea" id="RHEA-COMP:10286"/>
        <dbReference type="Rhea" id="RHEA-COMP:10287"/>
        <dbReference type="ChEBI" id="CHEBI:15378"/>
        <dbReference type="ChEBI" id="CHEBI:57856"/>
        <dbReference type="ChEBI" id="CHEBI:59789"/>
        <dbReference type="ChEBI" id="CHEBI:74506"/>
        <dbReference type="ChEBI" id="CHEBI:82748"/>
        <dbReference type="EC" id="2.1.1.199"/>
    </reaction>
</comment>
<comment type="subcellular location">
    <subcellularLocation>
        <location evidence="1">Cytoplasm</location>
    </subcellularLocation>
</comment>
<comment type="similarity">
    <text evidence="1">Belongs to the methyltransferase superfamily. RsmH family.</text>
</comment>
<accession>B5F7V6</accession>
<evidence type="ECO:0000255" key="1">
    <source>
        <dbReference type="HAMAP-Rule" id="MF_01007"/>
    </source>
</evidence>
<dbReference type="EC" id="2.1.1.199" evidence="1"/>
<dbReference type="EMBL" id="CP001138">
    <property type="protein sequence ID" value="ACH49787.1"/>
    <property type="molecule type" value="Genomic_DNA"/>
</dbReference>
<dbReference type="RefSeq" id="WP_000970444.1">
    <property type="nucleotide sequence ID" value="NC_011149.1"/>
</dbReference>
<dbReference type="SMR" id="B5F7V6"/>
<dbReference type="KEGG" id="sea:SeAg_B0137"/>
<dbReference type="HOGENOM" id="CLU_038422_2_0_6"/>
<dbReference type="Proteomes" id="UP000008819">
    <property type="component" value="Chromosome"/>
</dbReference>
<dbReference type="GO" id="GO:0005737">
    <property type="term" value="C:cytoplasm"/>
    <property type="evidence" value="ECO:0007669"/>
    <property type="project" value="UniProtKB-SubCell"/>
</dbReference>
<dbReference type="GO" id="GO:0071424">
    <property type="term" value="F:rRNA (cytosine-N4-)-methyltransferase activity"/>
    <property type="evidence" value="ECO:0007669"/>
    <property type="project" value="UniProtKB-UniRule"/>
</dbReference>
<dbReference type="GO" id="GO:0070475">
    <property type="term" value="P:rRNA base methylation"/>
    <property type="evidence" value="ECO:0007669"/>
    <property type="project" value="UniProtKB-UniRule"/>
</dbReference>
<dbReference type="FunFam" id="1.10.150.170:FF:000001">
    <property type="entry name" value="Ribosomal RNA small subunit methyltransferase H"/>
    <property type="match status" value="1"/>
</dbReference>
<dbReference type="Gene3D" id="1.10.150.170">
    <property type="entry name" value="Putative methyltransferase TM0872, insert domain"/>
    <property type="match status" value="1"/>
</dbReference>
<dbReference type="Gene3D" id="3.40.50.150">
    <property type="entry name" value="Vaccinia Virus protein VP39"/>
    <property type="match status" value="1"/>
</dbReference>
<dbReference type="HAMAP" id="MF_01007">
    <property type="entry name" value="16SrRNA_methyltr_H"/>
    <property type="match status" value="1"/>
</dbReference>
<dbReference type="InterPro" id="IPR002903">
    <property type="entry name" value="RsmH"/>
</dbReference>
<dbReference type="InterPro" id="IPR023397">
    <property type="entry name" value="SAM-dep_MeTrfase_MraW_recog"/>
</dbReference>
<dbReference type="InterPro" id="IPR029063">
    <property type="entry name" value="SAM-dependent_MTases_sf"/>
</dbReference>
<dbReference type="NCBIfam" id="TIGR00006">
    <property type="entry name" value="16S rRNA (cytosine(1402)-N(4))-methyltransferase RsmH"/>
    <property type="match status" value="1"/>
</dbReference>
<dbReference type="PANTHER" id="PTHR11265:SF0">
    <property type="entry name" value="12S RRNA N4-METHYLCYTIDINE METHYLTRANSFERASE"/>
    <property type="match status" value="1"/>
</dbReference>
<dbReference type="PANTHER" id="PTHR11265">
    <property type="entry name" value="S-ADENOSYL-METHYLTRANSFERASE MRAW"/>
    <property type="match status" value="1"/>
</dbReference>
<dbReference type="Pfam" id="PF01795">
    <property type="entry name" value="Methyltransf_5"/>
    <property type="match status" value="1"/>
</dbReference>
<dbReference type="PIRSF" id="PIRSF004486">
    <property type="entry name" value="MraW"/>
    <property type="match status" value="1"/>
</dbReference>
<dbReference type="SUPFAM" id="SSF81799">
    <property type="entry name" value="Putative methyltransferase TM0872, insert domain"/>
    <property type="match status" value="1"/>
</dbReference>
<dbReference type="SUPFAM" id="SSF53335">
    <property type="entry name" value="S-adenosyl-L-methionine-dependent methyltransferases"/>
    <property type="match status" value="1"/>
</dbReference>
<feature type="chain" id="PRO_0000387097" description="Ribosomal RNA small subunit methyltransferase H">
    <location>
        <begin position="1"/>
        <end position="313"/>
    </location>
</feature>
<feature type="binding site" evidence="1">
    <location>
        <begin position="35"/>
        <end position="37"/>
    </location>
    <ligand>
        <name>S-adenosyl-L-methionine</name>
        <dbReference type="ChEBI" id="CHEBI:59789"/>
    </ligand>
</feature>
<feature type="binding site" evidence="1">
    <location>
        <position position="55"/>
    </location>
    <ligand>
        <name>S-adenosyl-L-methionine</name>
        <dbReference type="ChEBI" id="CHEBI:59789"/>
    </ligand>
</feature>
<feature type="binding site" evidence="1">
    <location>
        <position position="79"/>
    </location>
    <ligand>
        <name>S-adenosyl-L-methionine</name>
        <dbReference type="ChEBI" id="CHEBI:59789"/>
    </ligand>
</feature>
<feature type="binding site" evidence="1">
    <location>
        <position position="101"/>
    </location>
    <ligand>
        <name>S-adenosyl-L-methionine</name>
        <dbReference type="ChEBI" id="CHEBI:59789"/>
    </ligand>
</feature>
<feature type="binding site" evidence="1">
    <location>
        <position position="108"/>
    </location>
    <ligand>
        <name>S-adenosyl-L-methionine</name>
        <dbReference type="ChEBI" id="CHEBI:59789"/>
    </ligand>
</feature>
<sequence length="313" mass="34776">MMENFKHTTVLLDEAVNGLNIRPDGIYIDGTFGRGGHSRLILSQLGEEGRLLAIDRDPQAIAVAQTINDPRFSIIHGPFSALADYVAERELTGKIDGILLDLGVSSPQLDDAERGFSFMRDGPLDMRMDPTRGQSAAEWLQTAEEADIAWVLKTFGEERFAKRIARAIVERNREQPMTRTKELAEVVAAATPVKDKFKHPATRTFQAVRIWVNSELEEIEQALKSSLSVLAPGGRLSIISFHSLEDRIVKRFMREQSRGPQVPAGLPMTEAQLKKLGGRELRALGKLMPGEKEVAENPRARSSVLRIAERTNA</sequence>
<name>RSMH_SALA4</name>
<protein>
    <recommendedName>
        <fullName evidence="1">Ribosomal RNA small subunit methyltransferase H</fullName>
        <ecNumber evidence="1">2.1.1.199</ecNumber>
    </recommendedName>
    <alternativeName>
        <fullName evidence="1">16S rRNA m(4)C1402 methyltransferase</fullName>
    </alternativeName>
    <alternativeName>
        <fullName evidence="1">rRNA (cytosine-N(4)-)-methyltransferase RsmH</fullName>
    </alternativeName>
</protein>
<proteinExistence type="inferred from homology"/>
<reference key="1">
    <citation type="journal article" date="2011" name="J. Bacteriol.">
        <title>Comparative genomics of 28 Salmonella enterica isolates: evidence for CRISPR-mediated adaptive sublineage evolution.</title>
        <authorList>
            <person name="Fricke W.F."/>
            <person name="Mammel M.K."/>
            <person name="McDermott P.F."/>
            <person name="Tartera C."/>
            <person name="White D.G."/>
            <person name="Leclerc J.E."/>
            <person name="Ravel J."/>
            <person name="Cebula T.A."/>
        </authorList>
    </citation>
    <scope>NUCLEOTIDE SEQUENCE [LARGE SCALE GENOMIC DNA]</scope>
    <source>
        <strain>SL483</strain>
    </source>
</reference>
<organism>
    <name type="scientific">Salmonella agona (strain SL483)</name>
    <dbReference type="NCBI Taxonomy" id="454166"/>
    <lineage>
        <taxon>Bacteria</taxon>
        <taxon>Pseudomonadati</taxon>
        <taxon>Pseudomonadota</taxon>
        <taxon>Gammaproteobacteria</taxon>
        <taxon>Enterobacterales</taxon>
        <taxon>Enterobacteriaceae</taxon>
        <taxon>Salmonella</taxon>
    </lineage>
</organism>
<keyword id="KW-0963">Cytoplasm</keyword>
<keyword id="KW-0489">Methyltransferase</keyword>
<keyword id="KW-0698">rRNA processing</keyword>
<keyword id="KW-0949">S-adenosyl-L-methionine</keyword>
<keyword id="KW-0808">Transferase</keyword>